<feature type="transit peptide" description="Mitochondrion" evidence="1">
    <location>
        <begin position="1"/>
        <end position="40"/>
    </location>
</feature>
<feature type="chain" id="PRO_0000388100" description="Ubiquinone biosynthesis protein coq4, mitochondrial">
    <location>
        <begin position="41"/>
        <end position="287"/>
    </location>
</feature>
<feature type="binding site" evidence="1">
    <location>
        <position position="169"/>
    </location>
    <ligand>
        <name>Zn(2+)</name>
        <dbReference type="ChEBI" id="CHEBI:29105"/>
    </ligand>
</feature>
<feature type="binding site" evidence="1">
    <location>
        <position position="170"/>
    </location>
    <ligand>
        <name>Zn(2+)</name>
        <dbReference type="ChEBI" id="CHEBI:29105"/>
    </ligand>
</feature>
<feature type="binding site" evidence="1">
    <location>
        <position position="173"/>
    </location>
    <ligand>
        <name>Zn(2+)</name>
        <dbReference type="ChEBI" id="CHEBI:29105"/>
    </ligand>
</feature>
<feature type="binding site" evidence="1">
    <location>
        <position position="185"/>
    </location>
    <ligand>
        <name>Zn(2+)</name>
        <dbReference type="ChEBI" id="CHEBI:29105"/>
    </ligand>
</feature>
<organism>
    <name type="scientific">Aspergillus terreus (strain NIH 2624 / FGSC A1156)</name>
    <dbReference type="NCBI Taxonomy" id="341663"/>
    <lineage>
        <taxon>Eukaryota</taxon>
        <taxon>Fungi</taxon>
        <taxon>Dikarya</taxon>
        <taxon>Ascomycota</taxon>
        <taxon>Pezizomycotina</taxon>
        <taxon>Eurotiomycetes</taxon>
        <taxon>Eurotiomycetidae</taxon>
        <taxon>Eurotiales</taxon>
        <taxon>Aspergillaceae</taxon>
        <taxon>Aspergillus</taxon>
        <taxon>Aspergillus subgen. Circumdati</taxon>
    </lineage>
</organism>
<accession>Q0CC00</accession>
<keyword id="KW-0456">Lyase</keyword>
<keyword id="KW-0472">Membrane</keyword>
<keyword id="KW-0479">Metal-binding</keyword>
<keyword id="KW-0496">Mitochondrion</keyword>
<keyword id="KW-0999">Mitochondrion inner membrane</keyword>
<keyword id="KW-1185">Reference proteome</keyword>
<keyword id="KW-0809">Transit peptide</keyword>
<keyword id="KW-0831">Ubiquinone biosynthesis</keyword>
<keyword id="KW-0862">Zinc</keyword>
<reference key="1">
    <citation type="submission" date="2005-09" db="EMBL/GenBank/DDBJ databases">
        <title>Annotation of the Aspergillus terreus NIH2624 genome.</title>
        <authorList>
            <person name="Birren B.W."/>
            <person name="Lander E.S."/>
            <person name="Galagan J.E."/>
            <person name="Nusbaum C."/>
            <person name="Devon K."/>
            <person name="Henn M."/>
            <person name="Ma L.-J."/>
            <person name="Jaffe D.B."/>
            <person name="Butler J."/>
            <person name="Alvarez P."/>
            <person name="Gnerre S."/>
            <person name="Grabherr M."/>
            <person name="Kleber M."/>
            <person name="Mauceli E.W."/>
            <person name="Brockman W."/>
            <person name="Rounsley S."/>
            <person name="Young S.K."/>
            <person name="LaButti K."/>
            <person name="Pushparaj V."/>
            <person name="DeCaprio D."/>
            <person name="Crawford M."/>
            <person name="Koehrsen M."/>
            <person name="Engels R."/>
            <person name="Montgomery P."/>
            <person name="Pearson M."/>
            <person name="Howarth C."/>
            <person name="Larson L."/>
            <person name="Luoma S."/>
            <person name="White J."/>
            <person name="Alvarado L."/>
            <person name="Kodira C.D."/>
            <person name="Zeng Q."/>
            <person name="Oleary S."/>
            <person name="Yandava C."/>
            <person name="Denning D.W."/>
            <person name="Nierman W.C."/>
            <person name="Milne T."/>
            <person name="Madden K."/>
        </authorList>
    </citation>
    <scope>NUCLEOTIDE SEQUENCE [LARGE SCALE GENOMIC DNA]</scope>
    <source>
        <strain>NIH 2624 / FGSC A1156</strain>
    </source>
</reference>
<gene>
    <name type="primary">coq4</name>
    <name type="ORF">ATEG_08784</name>
</gene>
<proteinExistence type="inferred from homology"/>
<dbReference type="EC" id="4.1.1.130" evidence="1"/>
<dbReference type="EMBL" id="CH476606">
    <property type="protein sequence ID" value="EAU30916.1"/>
    <property type="molecule type" value="Genomic_DNA"/>
</dbReference>
<dbReference type="RefSeq" id="XP_001217370.1">
    <property type="nucleotide sequence ID" value="XM_001217369.1"/>
</dbReference>
<dbReference type="SMR" id="Q0CC00"/>
<dbReference type="STRING" id="341663.Q0CC00"/>
<dbReference type="EnsemblFungi" id="EAU30916">
    <property type="protein sequence ID" value="EAU30916"/>
    <property type="gene ID" value="ATEG_08784"/>
</dbReference>
<dbReference type="GeneID" id="4323387"/>
<dbReference type="VEuPathDB" id="FungiDB:ATEG_08784"/>
<dbReference type="eggNOG" id="KOG3244">
    <property type="taxonomic scope" value="Eukaryota"/>
</dbReference>
<dbReference type="HOGENOM" id="CLU_061241_0_0_1"/>
<dbReference type="OMA" id="YYERHFH"/>
<dbReference type="OrthoDB" id="4249at2759"/>
<dbReference type="UniPathway" id="UPA00232"/>
<dbReference type="Proteomes" id="UP000007963">
    <property type="component" value="Unassembled WGS sequence"/>
</dbReference>
<dbReference type="GO" id="GO:0031314">
    <property type="term" value="C:extrinsic component of mitochondrial inner membrane"/>
    <property type="evidence" value="ECO:0007669"/>
    <property type="project" value="UniProtKB-UniRule"/>
</dbReference>
<dbReference type="GO" id="GO:0006744">
    <property type="term" value="P:ubiquinone biosynthetic process"/>
    <property type="evidence" value="ECO:0007669"/>
    <property type="project" value="UniProtKB-UniRule"/>
</dbReference>
<dbReference type="HAMAP" id="MF_03111">
    <property type="entry name" value="Coq4"/>
    <property type="match status" value="1"/>
</dbReference>
<dbReference type="InterPro" id="IPR007715">
    <property type="entry name" value="Coq4"/>
</dbReference>
<dbReference type="InterPro" id="IPR027540">
    <property type="entry name" value="Coq4_euk"/>
</dbReference>
<dbReference type="PANTHER" id="PTHR12922">
    <property type="entry name" value="UBIQUINONE BIOSYNTHESIS PROTEIN"/>
    <property type="match status" value="1"/>
</dbReference>
<dbReference type="PANTHER" id="PTHR12922:SF7">
    <property type="entry name" value="UBIQUINONE BIOSYNTHESIS PROTEIN COQ4 HOMOLOG, MITOCHONDRIAL"/>
    <property type="match status" value="1"/>
</dbReference>
<dbReference type="Pfam" id="PF05019">
    <property type="entry name" value="Coq4"/>
    <property type="match status" value="1"/>
</dbReference>
<name>COQ4_ASPTN</name>
<comment type="function">
    <text evidence="1">Lyase that catalyzes the C1-decarboxylation of 4-hydroxy-3-methoxy-5-(all-trans-polyprenyl)benzoic acid into 2-methoxy-6-(all-trans-polyprenyl)phenol during ubiquinone biosynthesis.</text>
</comment>
<comment type="catalytic activity">
    <reaction evidence="1">
        <text>a 4-hydroxy-3-methoxy-5-(all-trans-polyprenyl)benzoate + H(+) = a 2-methoxy-6-(all-trans-polyprenyl)phenol + CO2</text>
        <dbReference type="Rhea" id="RHEA:81179"/>
        <dbReference type="Rhea" id="RHEA-COMP:9551"/>
        <dbReference type="Rhea" id="RHEA-COMP:10931"/>
        <dbReference type="ChEBI" id="CHEBI:15378"/>
        <dbReference type="ChEBI" id="CHEBI:16526"/>
        <dbReference type="ChEBI" id="CHEBI:62731"/>
        <dbReference type="ChEBI" id="CHEBI:84443"/>
        <dbReference type="EC" id="4.1.1.130"/>
    </reaction>
</comment>
<comment type="cofactor">
    <cofactor evidence="1">
        <name>Zn(2+)</name>
        <dbReference type="ChEBI" id="CHEBI:29105"/>
    </cofactor>
</comment>
<comment type="pathway">
    <text evidence="1">Cofactor biosynthesis; ubiquinone biosynthesis.</text>
</comment>
<comment type="subunit">
    <text evidence="1">Component of a multi-subunit COQ enzyme complex, composed of at least coq3, coq4, coq5, coq6, coq7 and coq9.</text>
</comment>
<comment type="subcellular location">
    <subcellularLocation>
        <location evidence="1">Mitochondrion inner membrane</location>
        <topology evidence="1">Peripheral membrane protein</topology>
        <orientation evidence="1">Matrix side</orientation>
    </subcellularLocation>
</comment>
<comment type="similarity">
    <text evidence="1">Belongs to the COQ4 family.</text>
</comment>
<evidence type="ECO:0000255" key="1">
    <source>
        <dbReference type="HAMAP-Rule" id="MF_03111"/>
    </source>
</evidence>
<sequence length="287" mass="32646">MSILGRRGAAIVARELPLPASSSSILASHPRAFSIFSRPQPKYPGHVPLNAIERGALAVGSAVGALMNPRRADLIAACGEATATPYFIYRLRDAMLSDPTGRQILRDRPRITSTTLPLPYLRSLPENSVGRTYAAWLDREGVSPDTRDEVKYIDDEECAYVMQRYRECHDFYHAVTGLPIFVEGELALKAFEFLNTLIPMTGLSMFAAVRLKPAERERLFSIYLPWAVRSGLGSKELICVYWEKILEKDVNELRRELGIERPPDMREIRRMIREQKKREKERLKQAE</sequence>
<protein>
    <recommendedName>
        <fullName evidence="1">Ubiquinone biosynthesis protein coq4, mitochondrial</fullName>
    </recommendedName>
    <alternativeName>
        <fullName>4-hydroxy-3-methoxy-5-polyprenylbenzoate decarboxylase</fullName>
        <ecNumber evidence="1">4.1.1.130</ecNumber>
    </alternativeName>
    <alternativeName>
        <fullName evidence="1">Coenzyme Q biosynthesis protein 4</fullName>
    </alternativeName>
</protein>